<evidence type="ECO:0000255" key="1">
    <source>
        <dbReference type="HAMAP-Rule" id="MF_00711"/>
    </source>
</evidence>
<protein>
    <recommendedName>
        <fullName evidence="1">Glycine dehydrogenase (decarboxylating)</fullName>
        <ecNumber evidence="1">1.4.4.2</ecNumber>
    </recommendedName>
    <alternativeName>
        <fullName evidence="1">Glycine cleavage system P-protein</fullName>
    </alternativeName>
    <alternativeName>
        <fullName evidence="1">Glycine decarboxylase</fullName>
    </alternativeName>
    <alternativeName>
        <fullName evidence="1">Glycine dehydrogenase (aminomethyl-transferring)</fullName>
    </alternativeName>
</protein>
<name>GCSP_BURO0</name>
<gene>
    <name evidence="1" type="primary">gcvP</name>
    <name type="ordered locus">Bcenmc03_0157</name>
</gene>
<reference key="1">
    <citation type="submission" date="2008-02" db="EMBL/GenBank/DDBJ databases">
        <title>Complete sequence of chromosome 1 of Burkholderia cenocepacia MC0-3.</title>
        <authorList>
            <person name="Copeland A."/>
            <person name="Lucas S."/>
            <person name="Lapidus A."/>
            <person name="Barry K."/>
            <person name="Bruce D."/>
            <person name="Goodwin L."/>
            <person name="Glavina del Rio T."/>
            <person name="Dalin E."/>
            <person name="Tice H."/>
            <person name="Pitluck S."/>
            <person name="Chain P."/>
            <person name="Malfatti S."/>
            <person name="Shin M."/>
            <person name="Vergez L."/>
            <person name="Schmutz J."/>
            <person name="Larimer F."/>
            <person name="Land M."/>
            <person name="Hauser L."/>
            <person name="Kyrpides N."/>
            <person name="Mikhailova N."/>
            <person name="Tiedje J."/>
            <person name="Richardson P."/>
        </authorList>
    </citation>
    <scope>NUCLEOTIDE SEQUENCE [LARGE SCALE GENOMIC DNA]</scope>
    <source>
        <strain>MC0-3</strain>
    </source>
</reference>
<organism>
    <name type="scientific">Burkholderia orbicola (strain MC0-3)</name>
    <dbReference type="NCBI Taxonomy" id="406425"/>
    <lineage>
        <taxon>Bacteria</taxon>
        <taxon>Pseudomonadati</taxon>
        <taxon>Pseudomonadota</taxon>
        <taxon>Betaproteobacteria</taxon>
        <taxon>Burkholderiales</taxon>
        <taxon>Burkholderiaceae</taxon>
        <taxon>Burkholderia</taxon>
        <taxon>Burkholderia cepacia complex</taxon>
        <taxon>Burkholderia orbicola</taxon>
    </lineage>
</organism>
<proteinExistence type="inferred from homology"/>
<comment type="function">
    <text evidence="1">The glycine cleavage system catalyzes the degradation of glycine. The P protein binds the alpha-amino group of glycine through its pyridoxal phosphate cofactor; CO(2) is released and the remaining methylamine moiety is then transferred to the lipoamide cofactor of the H protein.</text>
</comment>
<comment type="catalytic activity">
    <reaction evidence="1">
        <text>N(6)-[(R)-lipoyl]-L-lysyl-[glycine-cleavage complex H protein] + glycine + H(+) = N(6)-[(R)-S(8)-aminomethyldihydrolipoyl]-L-lysyl-[glycine-cleavage complex H protein] + CO2</text>
        <dbReference type="Rhea" id="RHEA:24304"/>
        <dbReference type="Rhea" id="RHEA-COMP:10494"/>
        <dbReference type="Rhea" id="RHEA-COMP:10495"/>
        <dbReference type="ChEBI" id="CHEBI:15378"/>
        <dbReference type="ChEBI" id="CHEBI:16526"/>
        <dbReference type="ChEBI" id="CHEBI:57305"/>
        <dbReference type="ChEBI" id="CHEBI:83099"/>
        <dbReference type="ChEBI" id="CHEBI:83143"/>
        <dbReference type="EC" id="1.4.4.2"/>
    </reaction>
</comment>
<comment type="cofactor">
    <cofactor evidence="1">
        <name>pyridoxal 5'-phosphate</name>
        <dbReference type="ChEBI" id="CHEBI:597326"/>
    </cofactor>
</comment>
<comment type="subunit">
    <text evidence="1">The glycine cleavage system is composed of four proteins: P, T, L and H.</text>
</comment>
<comment type="similarity">
    <text evidence="1">Belongs to the GcvP family.</text>
</comment>
<keyword id="KW-0560">Oxidoreductase</keyword>
<keyword id="KW-0663">Pyridoxal phosphate</keyword>
<accession>B1JSZ2</accession>
<dbReference type="EC" id="1.4.4.2" evidence="1"/>
<dbReference type="EMBL" id="CP000958">
    <property type="protein sequence ID" value="ACA89337.1"/>
    <property type="molecule type" value="Genomic_DNA"/>
</dbReference>
<dbReference type="RefSeq" id="WP_012327634.1">
    <property type="nucleotide sequence ID" value="NC_010508.1"/>
</dbReference>
<dbReference type="SMR" id="B1JSZ2"/>
<dbReference type="GeneID" id="83046955"/>
<dbReference type="KEGG" id="bcm:Bcenmc03_0157"/>
<dbReference type="HOGENOM" id="CLU_004620_1_1_4"/>
<dbReference type="Proteomes" id="UP000002169">
    <property type="component" value="Chromosome 1"/>
</dbReference>
<dbReference type="GO" id="GO:0005829">
    <property type="term" value="C:cytosol"/>
    <property type="evidence" value="ECO:0007669"/>
    <property type="project" value="TreeGrafter"/>
</dbReference>
<dbReference type="GO" id="GO:0005960">
    <property type="term" value="C:glycine cleavage complex"/>
    <property type="evidence" value="ECO:0007669"/>
    <property type="project" value="TreeGrafter"/>
</dbReference>
<dbReference type="GO" id="GO:0016594">
    <property type="term" value="F:glycine binding"/>
    <property type="evidence" value="ECO:0007669"/>
    <property type="project" value="TreeGrafter"/>
</dbReference>
<dbReference type="GO" id="GO:0004375">
    <property type="term" value="F:glycine dehydrogenase (decarboxylating) activity"/>
    <property type="evidence" value="ECO:0007669"/>
    <property type="project" value="UniProtKB-EC"/>
</dbReference>
<dbReference type="GO" id="GO:0030170">
    <property type="term" value="F:pyridoxal phosphate binding"/>
    <property type="evidence" value="ECO:0007669"/>
    <property type="project" value="TreeGrafter"/>
</dbReference>
<dbReference type="GO" id="GO:0019464">
    <property type="term" value="P:glycine decarboxylation via glycine cleavage system"/>
    <property type="evidence" value="ECO:0007669"/>
    <property type="project" value="UniProtKB-UniRule"/>
</dbReference>
<dbReference type="CDD" id="cd00613">
    <property type="entry name" value="GDC-P"/>
    <property type="match status" value="2"/>
</dbReference>
<dbReference type="FunFam" id="3.40.640.10:FF:000005">
    <property type="entry name" value="Glycine dehydrogenase (decarboxylating), mitochondrial"/>
    <property type="match status" value="1"/>
</dbReference>
<dbReference type="FunFam" id="3.90.1150.10:FF:000007">
    <property type="entry name" value="Glycine dehydrogenase (decarboxylating), mitochondrial"/>
    <property type="match status" value="1"/>
</dbReference>
<dbReference type="FunFam" id="3.40.640.10:FF:000007">
    <property type="entry name" value="glycine dehydrogenase (Decarboxylating), mitochondrial"/>
    <property type="match status" value="1"/>
</dbReference>
<dbReference type="Gene3D" id="3.90.1150.10">
    <property type="entry name" value="Aspartate Aminotransferase, domain 1"/>
    <property type="match status" value="2"/>
</dbReference>
<dbReference type="Gene3D" id="3.40.640.10">
    <property type="entry name" value="Type I PLP-dependent aspartate aminotransferase-like (Major domain)"/>
    <property type="match status" value="2"/>
</dbReference>
<dbReference type="HAMAP" id="MF_00711">
    <property type="entry name" value="GcvP"/>
    <property type="match status" value="1"/>
</dbReference>
<dbReference type="InterPro" id="IPR003437">
    <property type="entry name" value="GcvP"/>
</dbReference>
<dbReference type="InterPro" id="IPR049316">
    <property type="entry name" value="GDC-P_C"/>
</dbReference>
<dbReference type="InterPro" id="IPR049315">
    <property type="entry name" value="GDC-P_N"/>
</dbReference>
<dbReference type="InterPro" id="IPR020581">
    <property type="entry name" value="GDC_P"/>
</dbReference>
<dbReference type="InterPro" id="IPR015424">
    <property type="entry name" value="PyrdxlP-dep_Trfase"/>
</dbReference>
<dbReference type="InterPro" id="IPR015421">
    <property type="entry name" value="PyrdxlP-dep_Trfase_major"/>
</dbReference>
<dbReference type="InterPro" id="IPR015422">
    <property type="entry name" value="PyrdxlP-dep_Trfase_small"/>
</dbReference>
<dbReference type="NCBIfam" id="TIGR00461">
    <property type="entry name" value="gcvP"/>
    <property type="match status" value="1"/>
</dbReference>
<dbReference type="NCBIfam" id="NF003346">
    <property type="entry name" value="PRK04366.1"/>
    <property type="match status" value="1"/>
</dbReference>
<dbReference type="PANTHER" id="PTHR11773:SF1">
    <property type="entry name" value="GLYCINE DEHYDROGENASE (DECARBOXYLATING), MITOCHONDRIAL"/>
    <property type="match status" value="1"/>
</dbReference>
<dbReference type="PANTHER" id="PTHR11773">
    <property type="entry name" value="GLYCINE DEHYDROGENASE, DECARBOXYLATING"/>
    <property type="match status" value="1"/>
</dbReference>
<dbReference type="Pfam" id="PF21478">
    <property type="entry name" value="GcvP2_C"/>
    <property type="match status" value="1"/>
</dbReference>
<dbReference type="Pfam" id="PF02347">
    <property type="entry name" value="GDC-P"/>
    <property type="match status" value="2"/>
</dbReference>
<dbReference type="SUPFAM" id="SSF53383">
    <property type="entry name" value="PLP-dependent transferases"/>
    <property type="match status" value="2"/>
</dbReference>
<feature type="chain" id="PRO_1000190208" description="Glycine dehydrogenase (decarboxylating)">
    <location>
        <begin position="1"/>
        <end position="975"/>
    </location>
</feature>
<feature type="modified residue" description="N6-(pyridoxal phosphate)lysine" evidence="1">
    <location>
        <position position="723"/>
    </location>
</feature>
<sequence length="975" mass="104150">MKLEHPDRLMNRTPLSLAALETHDAFAERHIGPDAASQQAMLDTLGFASRAALIDAVIPASIRRAETLPLGPFAQPKSEAEALAALRALADKNQVFRSYIGQGYHDTHTPAVILRNVLENPAWYTAYTPYQPEISQGRLEALLNFQQMVADLTGLAISNASLLDEATAAAEAMTLLQRTGKPKSNVFYVADDVLPQTLEVIRTRALPIGIEVKTGPAADAAQANAFGVLLQYPGVNGDVRDYRALTDAIHAAGGHVVVAADLLALTVLTPPGEWGADVAIGNTQRFGVPMGFGGPHAAYLAVRDEFKRQMPGRLVGVTVDAQGKPALRLALQTREQHIRREKATSNVCTAQALLAIMASMYAVYHGPHGLKTIALRVNRIAALLAAGVKQLGFATVNDTFFDTLTIDTGARTAQVHEFAKAKRINLRRVSDTQVGVSVDETTTRDDLADLLDVFAQAAGGTAPAVDALDAGLAGVAALPAGLERTSAYLTHHVFNRHHSETEMLRYLRSLSDKDLALDRSMIPLGSCTMKLNATSEMLPVTWPEFGGIHPFAPAEQTVGYREMIDQLEQMLVAATGYAAVSLQPNAGSQGEYAGLLIIHAYHASRGEGHRDVCLIPASAHGTNPASAHMAGMKVVVVACDAQGNVDIADLKAKAEQHSANLAAIMITYPSTHGVFEQNVREICEIVHAHGGQVYVDGANMNAMVGLTAPGQFGGDVSHLNLHKTFCIPHGGGGPGVGPVAVGAHLAKFLPNQRSTGYARAEDGIGAVSAAPYGSASILPISWMYIAMMGAKNLTAATETAILNANYIAKRLAPHYPVLYSGPGGLVAHECILDLRPIKESSGISVDDVAKRLMDYGFHAPTMSFPVPGTLMVEPTESESQEELDRFIAAMIAIREEIRAVEEGRADREDNPLRHAPHTAAVVTANEWPHAYSREQAAYPVASLGTNKYWPPVGRADNAYGDRNLFCSCVPMSDYA</sequence>